<proteinExistence type="inferred from homology"/>
<sequence>MLSSITVRTKSGRLIPLVLAATLLAACSGRVSTTPPAPVQSEATASADYYLQQMQQSSDDSKADWQLLAIRALLREGKLPQAADLLGQLPSQLSEAQQLEQRLVSAELEIARHAPQQAQAILTKLDVAQLSQAQQLRYYQAVIAAAQGKTTLAQIRAYIALQPLLTQEKQRKANIDATWAALSTLTPADLNGMVINANEDILRGWLDLLRLYQDNRQDPALLKAAIKDWQTRYPNNPAATLLPSALDNILHLQSASTASIALLLPLNGQAKVFSDAIEAGFNAAKNGAFSQNSAPTAAAATDNGAPASSGTLAAATTPSAPADVNAAGAVSPSAQGTDAAAPAAPNDSAALPPLDAAGDPIAPSVSPGNPDAHIQVYDTSSQPLPALLSQAQQAGASLVVGPLLKNNVDQLNTLSTPLNILALNQPEQVQNHPNICYFALSPEDEARDAARHIWAQGKRTPLLLIPRSPLGDRVAKAFATEWQSLGGGSVLQQTFGSSAELRSTINGGTGIRLTGQPVSIAPAQPASVTIAGLTIPAPVQPPVASGGGVDAVYIIATPAEITLIKPMIDLANGTHNGIGLYASSRSYQAGAGPDFRLEMEGVQFSDIPLLAGSDPAILQQAPAQYRNDYSLMRLYAMGADAWTLANHFAQLRQIPGFQVQGATGTLSANDNCVIQRKLPWLQYQKGSIVPVQ</sequence>
<dbReference type="EMBL" id="CP001135">
    <property type="protein sequence ID" value="ACY83383.1"/>
    <property type="molecule type" value="Genomic_DNA"/>
</dbReference>
<dbReference type="RefSeq" id="WP_012847407.1">
    <property type="nucleotide sequence ID" value="NC_013508.1"/>
</dbReference>
<dbReference type="SMR" id="D0ZBY2"/>
<dbReference type="GeneID" id="72527428"/>
<dbReference type="KEGG" id="etr:ETAE_0536"/>
<dbReference type="HOGENOM" id="CLU_026091_1_1_6"/>
<dbReference type="OrthoDB" id="6708821at2"/>
<dbReference type="Proteomes" id="UP000002634">
    <property type="component" value="Chromosome"/>
</dbReference>
<dbReference type="GO" id="GO:0031241">
    <property type="term" value="C:periplasmic side of cell outer membrane"/>
    <property type="evidence" value="ECO:0007669"/>
    <property type="project" value="UniProtKB-UniRule"/>
</dbReference>
<dbReference type="GO" id="GO:0030234">
    <property type="term" value="F:enzyme regulator activity"/>
    <property type="evidence" value="ECO:0007669"/>
    <property type="project" value="UniProtKB-UniRule"/>
</dbReference>
<dbReference type="GO" id="GO:0009252">
    <property type="term" value="P:peptidoglycan biosynthetic process"/>
    <property type="evidence" value="ECO:0007669"/>
    <property type="project" value="UniProtKB-UniRule"/>
</dbReference>
<dbReference type="GO" id="GO:0008360">
    <property type="term" value="P:regulation of cell shape"/>
    <property type="evidence" value="ECO:0007669"/>
    <property type="project" value="UniProtKB-KW"/>
</dbReference>
<dbReference type="CDD" id="cd06339">
    <property type="entry name" value="PBP1_YraM_LppC_lipoprotein-like"/>
    <property type="match status" value="1"/>
</dbReference>
<dbReference type="Gene3D" id="1.25.40.650">
    <property type="match status" value="1"/>
</dbReference>
<dbReference type="Gene3D" id="3.40.50.2300">
    <property type="match status" value="2"/>
</dbReference>
<dbReference type="Gene3D" id="1.25.40.10">
    <property type="entry name" value="Tetratricopeptide repeat domain"/>
    <property type="match status" value="1"/>
</dbReference>
<dbReference type="HAMAP" id="MF_01890">
    <property type="entry name" value="LpoA"/>
    <property type="match status" value="1"/>
</dbReference>
<dbReference type="InterPro" id="IPR007443">
    <property type="entry name" value="LpoA"/>
</dbReference>
<dbReference type="InterPro" id="IPR028082">
    <property type="entry name" value="Peripla_BP_I"/>
</dbReference>
<dbReference type="InterPro" id="IPR011990">
    <property type="entry name" value="TPR-like_helical_dom_sf"/>
</dbReference>
<dbReference type="PANTHER" id="PTHR38038">
    <property type="entry name" value="PENICILLIN-BINDING PROTEIN ACTIVATOR LPOA"/>
    <property type="match status" value="1"/>
</dbReference>
<dbReference type="PANTHER" id="PTHR38038:SF1">
    <property type="entry name" value="PENICILLIN-BINDING PROTEIN ACTIVATOR LPOA"/>
    <property type="match status" value="1"/>
</dbReference>
<dbReference type="Pfam" id="PF04348">
    <property type="entry name" value="LppC"/>
    <property type="match status" value="2"/>
</dbReference>
<dbReference type="SUPFAM" id="SSF53822">
    <property type="entry name" value="Periplasmic binding protein-like I"/>
    <property type="match status" value="1"/>
</dbReference>
<feature type="signal peptide" evidence="1">
    <location>
        <begin position="1"/>
        <end position="26"/>
    </location>
</feature>
<feature type="chain" id="PRO_0000405929" description="Penicillin-binding protein activator LpoA">
    <location>
        <begin position="27"/>
        <end position="692"/>
    </location>
</feature>
<feature type="region of interest" description="Disordered" evidence="2">
    <location>
        <begin position="297"/>
        <end position="316"/>
    </location>
</feature>
<feature type="region of interest" description="Disordered" evidence="2">
    <location>
        <begin position="324"/>
        <end position="373"/>
    </location>
</feature>
<feature type="compositionally biased region" description="Low complexity" evidence="2">
    <location>
        <begin position="332"/>
        <end position="363"/>
    </location>
</feature>
<feature type="lipid moiety-binding region" description="N-palmitoyl cysteine" evidence="1">
    <location>
        <position position="27"/>
    </location>
</feature>
<feature type="lipid moiety-binding region" description="S-diacylglycerol cysteine" evidence="1">
    <location>
        <position position="27"/>
    </location>
</feature>
<accession>D0ZBY2</accession>
<comment type="function">
    <text evidence="1">Regulator of peptidoglycan synthesis that is essential for the function of penicillin-binding protein 1A (PBP1a).</text>
</comment>
<comment type="subunit">
    <text evidence="1">Interacts with PBP1a.</text>
</comment>
<comment type="subcellular location">
    <subcellularLocation>
        <location evidence="1">Cell outer membrane</location>
        <topology evidence="1">Lipid-anchor</topology>
        <orientation evidence="1">Periplasmic side</orientation>
    </subcellularLocation>
</comment>
<comment type="similarity">
    <text evidence="1">Belongs to the LpoA family.</text>
</comment>
<organism>
    <name type="scientific">Edwardsiella piscicida</name>
    <dbReference type="NCBI Taxonomy" id="1263550"/>
    <lineage>
        <taxon>Bacteria</taxon>
        <taxon>Pseudomonadati</taxon>
        <taxon>Pseudomonadota</taxon>
        <taxon>Gammaproteobacteria</taxon>
        <taxon>Enterobacterales</taxon>
        <taxon>Hafniaceae</taxon>
        <taxon>Edwardsiella</taxon>
    </lineage>
</organism>
<evidence type="ECO:0000255" key="1">
    <source>
        <dbReference type="HAMAP-Rule" id="MF_01890"/>
    </source>
</evidence>
<evidence type="ECO:0000256" key="2">
    <source>
        <dbReference type="SAM" id="MobiDB-lite"/>
    </source>
</evidence>
<name>LPOA_EDWPI</name>
<keyword id="KW-0998">Cell outer membrane</keyword>
<keyword id="KW-0133">Cell shape</keyword>
<keyword id="KW-0449">Lipoprotein</keyword>
<keyword id="KW-0472">Membrane</keyword>
<keyword id="KW-0564">Palmitate</keyword>
<keyword id="KW-0573">Peptidoglycan synthesis</keyword>
<keyword id="KW-1185">Reference proteome</keyword>
<keyword id="KW-0732">Signal</keyword>
<reference key="1">
    <citation type="journal article" date="2009" name="PLoS ONE">
        <title>Genome sequence of the versatile fish pathogen Edwardsiella tarda provides insights into its adaptation to broad host ranges and intracellular niches.</title>
        <authorList>
            <person name="Wang Q."/>
            <person name="Yang M."/>
            <person name="Xiao J."/>
            <person name="Wu H."/>
            <person name="Wang X."/>
            <person name="Lv Y."/>
            <person name="Xu L."/>
            <person name="Zheng H."/>
            <person name="Wang S."/>
            <person name="Zhao G."/>
            <person name="Liu Q."/>
            <person name="Zhang Y."/>
        </authorList>
    </citation>
    <scope>NUCLEOTIDE SEQUENCE [LARGE SCALE GENOMIC DNA]</scope>
    <source>
        <strain>EIB202 / CCTCC M208068</strain>
    </source>
</reference>
<protein>
    <recommendedName>
        <fullName evidence="1">Penicillin-binding protein activator LpoA</fullName>
        <shortName evidence="1">PBP activator LpoA</shortName>
    </recommendedName>
</protein>
<gene>
    <name evidence="1" type="primary">lpoA</name>
    <name type="ordered locus">ETAE_0536</name>
</gene>